<feature type="chain" id="PRO_0000154135" description="Aminodeoxychorismate synthase component 1">
    <location>
        <begin position="1"/>
        <end position="470"/>
    </location>
</feature>
<feature type="mutagenesis site" description="Complete loss of aminodeoxychorismate synthase activity." evidence="2">
    <original>A</original>
    <variation>I</variation>
    <location>
        <position position="283"/>
    </location>
</feature>
<feature type="mutagenesis site" description="Absence of covalent intermediate." evidence="2">
    <original>A</original>
    <variation>K</variation>
    <location>
        <position position="283"/>
    </location>
</feature>
<feature type="mutagenesis site" description="Complete loss of aminodeoxychorismate synthase activity." evidence="2">
    <original>A</original>
    <variation>V</variation>
    <location>
        <position position="283"/>
    </location>
</feature>
<dbReference type="EC" id="2.6.1.85"/>
<dbReference type="EMBL" id="M34053">
    <property type="protein sequence ID" value="AAA22694.1"/>
    <property type="molecule type" value="Genomic_DNA"/>
</dbReference>
<dbReference type="EMBL" id="D26185">
    <property type="protein sequence ID" value="BAA05309.1"/>
    <property type="molecule type" value="Genomic_DNA"/>
</dbReference>
<dbReference type="EMBL" id="AL009126">
    <property type="protein sequence ID" value="CAB11850.1"/>
    <property type="molecule type" value="Genomic_DNA"/>
</dbReference>
<dbReference type="PIR" id="A37854">
    <property type="entry name" value="A37854"/>
</dbReference>
<dbReference type="RefSeq" id="NP_387955.1">
    <property type="nucleotide sequence ID" value="NC_000964.3"/>
</dbReference>
<dbReference type="RefSeq" id="WP_003242468.1">
    <property type="nucleotide sequence ID" value="NZ_OZ025638.1"/>
</dbReference>
<dbReference type="PDB" id="7PI1">
    <property type="method" value="X-ray"/>
    <property type="resolution" value="1.73 A"/>
    <property type="chains" value="AAA/BBB/CCC/DDD=1-470"/>
</dbReference>
<dbReference type="PDBsum" id="7PI1"/>
<dbReference type="SMR" id="P28820"/>
<dbReference type="FunCoup" id="P28820">
    <property type="interactions" value="127"/>
</dbReference>
<dbReference type="STRING" id="224308.BSU00740"/>
<dbReference type="PaxDb" id="224308-BSU00740"/>
<dbReference type="EnsemblBacteria" id="CAB11850">
    <property type="protein sequence ID" value="CAB11850"/>
    <property type="gene ID" value="BSU_00740"/>
</dbReference>
<dbReference type="GeneID" id="936926"/>
<dbReference type="KEGG" id="bsu:BSU00740"/>
<dbReference type="PATRIC" id="fig|224308.179.peg.74"/>
<dbReference type="eggNOG" id="COG0147">
    <property type="taxonomic scope" value="Bacteria"/>
</dbReference>
<dbReference type="InParanoid" id="P28820"/>
<dbReference type="OrthoDB" id="9803598at2"/>
<dbReference type="PhylomeDB" id="P28820"/>
<dbReference type="BioCyc" id="BSUB:BSU00740-MONOMER"/>
<dbReference type="BioCyc" id="MetaCyc:BSU00740-MONOMER"/>
<dbReference type="BRENDA" id="2.6.1.85">
    <property type="organism ID" value="658"/>
</dbReference>
<dbReference type="SABIO-RK" id="P28820"/>
<dbReference type="UniPathway" id="UPA00077">
    <property type="reaction ID" value="UER00149"/>
</dbReference>
<dbReference type="Proteomes" id="UP000001570">
    <property type="component" value="Chromosome"/>
</dbReference>
<dbReference type="GO" id="GO:0046820">
    <property type="term" value="F:4-amino-4-deoxychorismate synthase activity"/>
    <property type="evidence" value="ECO:0000314"/>
    <property type="project" value="UniProtKB"/>
</dbReference>
<dbReference type="GO" id="GO:0000287">
    <property type="term" value="F:magnesium ion binding"/>
    <property type="evidence" value="ECO:0000250"/>
    <property type="project" value="UniProtKB"/>
</dbReference>
<dbReference type="GO" id="GO:0046656">
    <property type="term" value="P:folic acid biosynthetic process"/>
    <property type="evidence" value="ECO:0007669"/>
    <property type="project" value="UniProtKB-KW"/>
</dbReference>
<dbReference type="GO" id="GO:0000162">
    <property type="term" value="P:L-tryptophan biosynthetic process"/>
    <property type="evidence" value="ECO:0000318"/>
    <property type="project" value="GO_Central"/>
</dbReference>
<dbReference type="GO" id="GO:0046654">
    <property type="term" value="P:tetrahydrofolate biosynthetic process"/>
    <property type="evidence" value="ECO:0000314"/>
    <property type="project" value="UniProtKB"/>
</dbReference>
<dbReference type="FunFam" id="3.60.120.10:FF:000004">
    <property type="entry name" value="Aminodeoxychorismate synthase, component I"/>
    <property type="match status" value="1"/>
</dbReference>
<dbReference type="Gene3D" id="3.60.120.10">
    <property type="entry name" value="Anthranilate synthase"/>
    <property type="match status" value="1"/>
</dbReference>
<dbReference type="InterPro" id="IPR005801">
    <property type="entry name" value="ADC_synthase"/>
</dbReference>
<dbReference type="InterPro" id="IPR019999">
    <property type="entry name" value="Anth_synth_I-like"/>
</dbReference>
<dbReference type="InterPro" id="IPR006805">
    <property type="entry name" value="Anth_synth_I_N"/>
</dbReference>
<dbReference type="InterPro" id="IPR015890">
    <property type="entry name" value="Chorismate_C"/>
</dbReference>
<dbReference type="PANTHER" id="PTHR11236">
    <property type="entry name" value="AMINOBENZOATE/ANTHRANILATE SYNTHASE"/>
    <property type="match status" value="1"/>
</dbReference>
<dbReference type="PANTHER" id="PTHR11236:SF41">
    <property type="entry name" value="AMINODEOXYCHORISMATE SYNTHASE COMPONENT 1"/>
    <property type="match status" value="1"/>
</dbReference>
<dbReference type="Pfam" id="PF04715">
    <property type="entry name" value="Anth_synt_I_N"/>
    <property type="match status" value="1"/>
</dbReference>
<dbReference type="Pfam" id="PF00425">
    <property type="entry name" value="Chorismate_bind"/>
    <property type="match status" value="1"/>
</dbReference>
<dbReference type="PRINTS" id="PR00095">
    <property type="entry name" value="ANTSNTHASEI"/>
</dbReference>
<dbReference type="SUPFAM" id="SSF56322">
    <property type="entry name" value="ADC synthase"/>
    <property type="match status" value="1"/>
</dbReference>
<protein>
    <recommendedName>
        <fullName>Aminodeoxychorismate synthase component 1</fullName>
        <shortName>ADC synthase</shortName>
        <shortName>ADCS</shortName>
        <ecNumber>2.6.1.85</ecNumber>
    </recommendedName>
    <alternativeName>
        <fullName>4-amino-4-deoxychorismate synthase component 1</fullName>
    </alternativeName>
</protein>
<reference key="1">
    <citation type="journal article" date="1990" name="J. Bacteriol.">
        <title>An apparent Bacillus subtilis folic acid biosynthetic operon containing pab, an amphibolic trpG gene, a third gene required for synthesis of para-aminobenzoic acid, and the dihydropteroate synthase gene.</title>
        <authorList>
            <person name="Slock J."/>
            <person name="Stahly D.P."/>
            <person name="Han C.-Y."/>
            <person name="Six E.W."/>
            <person name="Crawford I.P."/>
        </authorList>
    </citation>
    <scope>NUCLEOTIDE SEQUENCE [GENOMIC DNA]</scope>
    <scope>DISRUPTION PHENOTYPE</scope>
    <source>
        <strain>ASB342</strain>
    </source>
</reference>
<reference key="2">
    <citation type="journal article" date="1994" name="DNA Res.">
        <title>Systematic sequencing of the 180 kilobase region of the Bacillus subtilis chromosome containing the replication origin.</title>
        <authorList>
            <person name="Ogasawara N."/>
            <person name="Nakai S."/>
            <person name="Yoshikawa H."/>
        </authorList>
    </citation>
    <scope>NUCLEOTIDE SEQUENCE [GENOMIC DNA]</scope>
    <source>
        <strain>168</strain>
    </source>
</reference>
<reference key="3">
    <citation type="journal article" date="1997" name="Nature">
        <title>The complete genome sequence of the Gram-positive bacterium Bacillus subtilis.</title>
        <authorList>
            <person name="Kunst F."/>
            <person name="Ogasawara N."/>
            <person name="Moszer I."/>
            <person name="Albertini A.M."/>
            <person name="Alloni G."/>
            <person name="Azevedo V."/>
            <person name="Bertero M.G."/>
            <person name="Bessieres P."/>
            <person name="Bolotin A."/>
            <person name="Borchert S."/>
            <person name="Borriss R."/>
            <person name="Boursier L."/>
            <person name="Brans A."/>
            <person name="Braun M."/>
            <person name="Brignell S.C."/>
            <person name="Bron S."/>
            <person name="Brouillet S."/>
            <person name="Bruschi C.V."/>
            <person name="Caldwell B."/>
            <person name="Capuano V."/>
            <person name="Carter N.M."/>
            <person name="Choi S.-K."/>
            <person name="Codani J.-J."/>
            <person name="Connerton I.F."/>
            <person name="Cummings N.J."/>
            <person name="Daniel R.A."/>
            <person name="Denizot F."/>
            <person name="Devine K.M."/>
            <person name="Duesterhoeft A."/>
            <person name="Ehrlich S.D."/>
            <person name="Emmerson P.T."/>
            <person name="Entian K.-D."/>
            <person name="Errington J."/>
            <person name="Fabret C."/>
            <person name="Ferrari E."/>
            <person name="Foulger D."/>
            <person name="Fritz C."/>
            <person name="Fujita M."/>
            <person name="Fujita Y."/>
            <person name="Fuma S."/>
            <person name="Galizzi A."/>
            <person name="Galleron N."/>
            <person name="Ghim S.-Y."/>
            <person name="Glaser P."/>
            <person name="Goffeau A."/>
            <person name="Golightly E.J."/>
            <person name="Grandi G."/>
            <person name="Guiseppi G."/>
            <person name="Guy B.J."/>
            <person name="Haga K."/>
            <person name="Haiech J."/>
            <person name="Harwood C.R."/>
            <person name="Henaut A."/>
            <person name="Hilbert H."/>
            <person name="Holsappel S."/>
            <person name="Hosono S."/>
            <person name="Hullo M.-F."/>
            <person name="Itaya M."/>
            <person name="Jones L.-M."/>
            <person name="Joris B."/>
            <person name="Karamata D."/>
            <person name="Kasahara Y."/>
            <person name="Klaerr-Blanchard M."/>
            <person name="Klein C."/>
            <person name="Kobayashi Y."/>
            <person name="Koetter P."/>
            <person name="Koningstein G."/>
            <person name="Krogh S."/>
            <person name="Kumano M."/>
            <person name="Kurita K."/>
            <person name="Lapidus A."/>
            <person name="Lardinois S."/>
            <person name="Lauber J."/>
            <person name="Lazarevic V."/>
            <person name="Lee S.-M."/>
            <person name="Levine A."/>
            <person name="Liu H."/>
            <person name="Masuda S."/>
            <person name="Mauel C."/>
            <person name="Medigue C."/>
            <person name="Medina N."/>
            <person name="Mellado R.P."/>
            <person name="Mizuno M."/>
            <person name="Moestl D."/>
            <person name="Nakai S."/>
            <person name="Noback M."/>
            <person name="Noone D."/>
            <person name="O'Reilly M."/>
            <person name="Ogawa K."/>
            <person name="Ogiwara A."/>
            <person name="Oudega B."/>
            <person name="Park S.-H."/>
            <person name="Parro V."/>
            <person name="Pohl T.M."/>
            <person name="Portetelle D."/>
            <person name="Porwollik S."/>
            <person name="Prescott A.M."/>
            <person name="Presecan E."/>
            <person name="Pujic P."/>
            <person name="Purnelle B."/>
            <person name="Rapoport G."/>
            <person name="Rey M."/>
            <person name="Reynolds S."/>
            <person name="Rieger M."/>
            <person name="Rivolta C."/>
            <person name="Rocha E."/>
            <person name="Roche B."/>
            <person name="Rose M."/>
            <person name="Sadaie Y."/>
            <person name="Sato T."/>
            <person name="Scanlan E."/>
            <person name="Schleich S."/>
            <person name="Schroeter R."/>
            <person name="Scoffone F."/>
            <person name="Sekiguchi J."/>
            <person name="Sekowska A."/>
            <person name="Seror S.J."/>
            <person name="Serror P."/>
            <person name="Shin B.-S."/>
            <person name="Soldo B."/>
            <person name="Sorokin A."/>
            <person name="Tacconi E."/>
            <person name="Takagi T."/>
            <person name="Takahashi H."/>
            <person name="Takemaru K."/>
            <person name="Takeuchi M."/>
            <person name="Tamakoshi A."/>
            <person name="Tanaka T."/>
            <person name="Terpstra P."/>
            <person name="Tognoni A."/>
            <person name="Tosato V."/>
            <person name="Uchiyama S."/>
            <person name="Vandenbol M."/>
            <person name="Vannier F."/>
            <person name="Vassarotti A."/>
            <person name="Viari A."/>
            <person name="Wambutt R."/>
            <person name="Wedler E."/>
            <person name="Wedler H."/>
            <person name="Weitzenegger T."/>
            <person name="Winters P."/>
            <person name="Wipat A."/>
            <person name="Yamamoto H."/>
            <person name="Yamane K."/>
            <person name="Yasumoto K."/>
            <person name="Yata K."/>
            <person name="Yoshida K."/>
            <person name="Yoshikawa H.-F."/>
            <person name="Zumstein E."/>
            <person name="Yoshikawa H."/>
            <person name="Danchin A."/>
        </authorList>
    </citation>
    <scope>NUCLEOTIDE SEQUENCE [LARGE SCALE GENOMIC DNA]</scope>
    <source>
        <strain>168</strain>
    </source>
</reference>
<reference key="4">
    <citation type="journal article" date="2009" name="J. Am. Chem. Soc.">
        <title>2-Amino-2-deoxyisochorismate is a key intermediate in Bacillus subtilis p-aminobenzoic acid biosynthesis.</title>
        <authorList>
            <person name="Schadt H.S."/>
            <person name="Schadt S."/>
            <person name="Oldach F."/>
            <person name="Sussmuth R.D."/>
        </authorList>
    </citation>
    <scope>FUNCTION</scope>
    <scope>CATALYTIC ACTIVITY</scope>
    <scope>MUTAGENESIS OF ALA-283</scope>
    <scope>BIOPHYSICOCHEMICAL PROPERTIES</scope>
    <scope>REACTION MECHANISM</scope>
    <scope>SUBUNIT</scope>
</reference>
<comment type="function">
    <text evidence="2">Part of a heterodimeric complex that catalyzes the two-step biosynthesis of 4-amino-4-deoxychorismate (ADC), a precursor of p-aminobenzoate (PABA) and tetrahydrofolate. In the first step, a glutamine amidotransferase (PabA) generates ammonia as a substrate that, along with chorismate, is used in the second step, catalyzed by aminodeoxychorismate synthase (PabB) to produce ADC.</text>
</comment>
<comment type="catalytic activity">
    <reaction evidence="2">
        <text>chorismate + L-glutamine = 4-amino-4-deoxychorismate + L-glutamate</text>
        <dbReference type="Rhea" id="RHEA:11672"/>
        <dbReference type="ChEBI" id="CHEBI:29748"/>
        <dbReference type="ChEBI" id="CHEBI:29985"/>
        <dbReference type="ChEBI" id="CHEBI:58359"/>
        <dbReference type="ChEBI" id="CHEBI:58406"/>
        <dbReference type="EC" id="2.6.1.85"/>
    </reaction>
</comment>
<comment type="cofactor">
    <cofactor evidence="1">
        <name>Mg(2+)</name>
        <dbReference type="ChEBI" id="CHEBI:18420"/>
    </cofactor>
</comment>
<comment type="biophysicochemical properties">
    <kinetics>
        <KM evidence="2">380 uM for chorismate (with PabA and ammonia as the amino donor at pH 7.5)</KM>
        <KM evidence="2">420 uM for chorismate (with PabA and glutamine as the amino donor at pH 7.5)</KM>
    </kinetics>
</comment>
<comment type="pathway">
    <text>Cofactor biosynthesis; tetrahydrofolate biosynthesis; 4-aminobenzoate from chorismate: step 1/2.</text>
</comment>
<comment type="subunit">
    <text evidence="2">Monomer. Heterodimer consisting of two non-identical subunits: a glutamine amidotransferase subunit (PabA) and a aminodeoxychorismate synthase subunit (PabB).</text>
</comment>
<comment type="disruption phenotype">
    <text evidence="3">Requires p-aminobenzoic acid but not tryptophan for growth.</text>
</comment>
<comment type="miscellaneous">
    <text evidence="6">The catalytically active amino acid residue K274 of E.coli enzyme is missing and corresponds to A283 in B.subtilis. It is postulated that the enzymatic mechanism for the PABA biosynthesis in B.subtilis proceeds without covalent intermediate. First, ammonia is added at C2 of chorismate with concomitant loss of the C4 hydroxy group, yielding 2-amino-2-deoxyisochorismate (ADIC). The second step is the addition of a second molecule ammonia to C4 of ADIC with concomitant loss of the C2 amino group, yielding ADC. Both steps are catalyzed by ADCS (PubMed:19275258).</text>
</comment>
<comment type="similarity">
    <text evidence="5">Belongs to the anthranilate synthase component I family.</text>
</comment>
<sequence>MAQRRPAGKKIPFQKDSFLQQFEKLAQSRKHHVLLESARGGRYSIAGLDPIATVKGKDGITTIKHGDEMLFKEGDPLRAFHSWFKTLETETNHEFPDFQGGAIGFLSYDYARYIENFKMLSLDDLETPDIYFLVFDDIAVYDHQEESLWLITHVNGSDQETADVKLSELEQMWLTELPAVTSREMKPETAGSFAAPFTEDGFSQAVEKIKQYIASGDVFQVNLSIRQSQSLSVHPYQIYKTLREVNPSPYMAYLETPDFQIICGSPELLVSKKGKLLETRPIAGTRSRGKTNEEDEALANELIHNEKERAEHVMLVDLERNDLGRVSRYGSVRVNEFMAIEKYSHVMHIVSNVQGELQDGYDAVDIIHAVFPGGTITGAPKVRTMEIIEELEPTRRGLYTGSIGWFGYNHDLQFNIVIRTIYATGGQAFMQSGAGVVIDSVPKHEYKESFKKAFAMQRALELSEEETKIR</sequence>
<accession>P28820</accession>
<keyword id="KW-0002">3D-structure</keyword>
<keyword id="KW-0289">Folate biosynthesis</keyword>
<keyword id="KW-0460">Magnesium</keyword>
<keyword id="KW-1185">Reference proteome</keyword>
<keyword id="KW-0808">Transferase</keyword>
<name>PABB_BACSU</name>
<evidence type="ECO:0000250" key="1"/>
<evidence type="ECO:0000269" key="2">
    <source>
    </source>
</evidence>
<evidence type="ECO:0000269" key="3">
    <source>
    </source>
</evidence>
<evidence type="ECO:0000303" key="4">
    <source>
    </source>
</evidence>
<evidence type="ECO:0000305" key="5"/>
<evidence type="ECO:0000305" key="6">
    <source>
    </source>
</evidence>
<proteinExistence type="evidence at protein level"/>
<gene>
    <name type="primary">pabB</name>
    <name evidence="4" type="synonym">pab</name>
    <name type="ordered locus">BSU00740</name>
</gene>
<organism>
    <name type="scientific">Bacillus subtilis (strain 168)</name>
    <dbReference type="NCBI Taxonomy" id="224308"/>
    <lineage>
        <taxon>Bacteria</taxon>
        <taxon>Bacillati</taxon>
        <taxon>Bacillota</taxon>
        <taxon>Bacilli</taxon>
        <taxon>Bacillales</taxon>
        <taxon>Bacillaceae</taxon>
        <taxon>Bacillus</taxon>
    </lineage>
</organism>